<dbReference type="EC" id="3.2.1.78"/>
<dbReference type="EMBL" id="AJ271365">
    <property type="protein sequence ID" value="CAC81056.1"/>
    <property type="molecule type" value="Genomic_DNA"/>
</dbReference>
<dbReference type="PDB" id="2C0H">
    <property type="method" value="X-ray"/>
    <property type="resolution" value="1.60 A"/>
    <property type="chains" value="A=15-367"/>
</dbReference>
<dbReference type="PDBsum" id="2C0H"/>
<dbReference type="SMR" id="Q8WPJ2"/>
<dbReference type="CAZy" id="GH5">
    <property type="family name" value="Glycoside Hydrolase Family 5"/>
</dbReference>
<dbReference type="BRENDA" id="3.2.1.78">
    <property type="organism ID" value="3544"/>
</dbReference>
<dbReference type="EvolutionaryTrace" id="Q8WPJ2"/>
<dbReference type="GO" id="GO:0016985">
    <property type="term" value="F:mannan endo-1,4-beta-mannosidase activity"/>
    <property type="evidence" value="ECO:0000314"/>
    <property type="project" value="UniProtKB"/>
</dbReference>
<dbReference type="GO" id="GO:0046355">
    <property type="term" value="P:mannan catabolic process"/>
    <property type="evidence" value="ECO:0000314"/>
    <property type="project" value="UniProtKB"/>
</dbReference>
<dbReference type="Gene3D" id="3.20.20.80">
    <property type="entry name" value="Glycosidases"/>
    <property type="match status" value="1"/>
</dbReference>
<dbReference type="InterPro" id="IPR017853">
    <property type="entry name" value="Glycoside_hydrolase_SF"/>
</dbReference>
<dbReference type="PANTHER" id="PTHR37398">
    <property type="entry name" value="ENDO-BETA-1,4-MANNANASE"/>
    <property type="match status" value="1"/>
</dbReference>
<dbReference type="PANTHER" id="PTHR37398:SF3">
    <property type="entry name" value="GLYCOSIDE HYDROLASE FAMILY 5 DOMAIN-CONTAINING PROTEIN"/>
    <property type="match status" value="1"/>
</dbReference>
<dbReference type="SUPFAM" id="SSF51445">
    <property type="entry name" value="(Trans)glycosidases"/>
    <property type="match status" value="1"/>
</dbReference>
<protein>
    <recommendedName>
        <fullName>Mannan endo-1,4-beta-mannosidase</fullName>
        <ecNumber>3.2.1.78</ecNumber>
    </recommendedName>
    <alternativeName>
        <fullName>Beta-mannanase</fullName>
    </alternativeName>
    <alternativeName>
        <fullName>Endo-beta-1,4-mannanase</fullName>
        <shortName>Man5A</shortName>
        <shortName>ManA</shortName>
    </alternativeName>
</protein>
<organism evidence="7">
    <name type="scientific">Mytilus edulis</name>
    <name type="common">Blue mussel</name>
    <dbReference type="NCBI Taxonomy" id="6550"/>
    <lineage>
        <taxon>Eukaryota</taxon>
        <taxon>Metazoa</taxon>
        <taxon>Spiralia</taxon>
        <taxon>Lophotrochozoa</taxon>
        <taxon>Mollusca</taxon>
        <taxon>Bivalvia</taxon>
        <taxon>Autobranchia</taxon>
        <taxon>Pteriomorphia</taxon>
        <taxon>Mytilida</taxon>
        <taxon>Mytiloidea</taxon>
        <taxon>Mytilidae</taxon>
        <taxon>Mytilinae</taxon>
        <taxon>Mytilus</taxon>
    </lineage>
</organism>
<evidence type="ECO:0000250" key="1">
    <source>
        <dbReference type="UniProtKB" id="B4XC07"/>
    </source>
</evidence>
<evidence type="ECO:0000250" key="2">
    <source>
        <dbReference type="UniProtKB" id="P07985"/>
    </source>
</evidence>
<evidence type="ECO:0000269" key="3">
    <source>
    </source>
</evidence>
<evidence type="ECO:0000269" key="4">
    <source>
    </source>
</evidence>
<evidence type="ECO:0000269" key="5">
    <source>
    </source>
</evidence>
<evidence type="ECO:0000305" key="6"/>
<evidence type="ECO:0000312" key="7">
    <source>
        <dbReference type="EMBL" id="CAC81056.1"/>
    </source>
</evidence>
<evidence type="ECO:0007829" key="8">
    <source>
        <dbReference type="PDB" id="2C0H"/>
    </source>
</evidence>
<proteinExistence type="evidence at protein level"/>
<accession>Q8WPJ2</accession>
<accession>P82544</accession>
<accession>P82801</accession>
<keyword id="KW-0002">3D-structure</keyword>
<keyword id="KW-0903">Direct protein sequencing</keyword>
<keyword id="KW-1015">Disulfide bond</keyword>
<keyword id="KW-0326">Glycosidase</keyword>
<keyword id="KW-0378">Hydrolase</keyword>
<keyword id="KW-0732">Signal</keyword>
<feature type="signal peptide" evidence="3">
    <location>
        <begin position="1"/>
        <end position="17"/>
    </location>
</feature>
<feature type="chain" id="PRO_0000007901" description="Mannan endo-1,4-beta-mannosidase" evidence="3">
    <location>
        <begin position="18"/>
        <end position="367"/>
    </location>
</feature>
<feature type="active site" description="Proton donor" evidence="2">
    <location>
        <position position="177"/>
    </location>
</feature>
<feature type="active site" description="Nucleophile" evidence="2">
    <location>
        <position position="308"/>
    </location>
</feature>
<feature type="binding site" evidence="1">
    <location>
        <position position="79"/>
    </location>
    <ligand>
        <name>substrate</name>
    </ligand>
</feature>
<feature type="binding site" evidence="1">
    <location>
        <position position="176"/>
    </location>
    <ligand>
        <name>substrate</name>
    </ligand>
</feature>
<feature type="binding site" evidence="1">
    <location>
        <position position="205"/>
    </location>
    <ligand>
        <name>substrate</name>
    </ligand>
</feature>
<feature type="binding site" evidence="1">
    <location>
        <position position="240"/>
    </location>
    <ligand>
        <name>substrate</name>
    </ligand>
</feature>
<feature type="binding site" evidence="1">
    <location>
        <position position="279"/>
    </location>
    <ligand>
        <name>substrate</name>
    </ligand>
</feature>
<feature type="binding site" evidence="1">
    <location>
        <position position="337"/>
    </location>
    <ligand>
        <name>substrate</name>
    </ligand>
</feature>
<feature type="disulfide bond" evidence="6">
    <location>
        <begin position="192"/>
        <end position="259"/>
    </location>
</feature>
<feature type="sequence conflict" description="In Ref. 4; no nucleotide entry." evidence="6" ref="4">
    <original>I</original>
    <variation>M</variation>
    <location>
        <position position="68"/>
    </location>
</feature>
<feature type="sequence conflict" description="In Ref. 4; no nucleotide entry." evidence="6" ref="4">
    <original>I</original>
    <variation>M</variation>
    <location>
        <position position="351"/>
    </location>
</feature>
<feature type="strand" evidence="8">
    <location>
        <begin position="19"/>
        <end position="22"/>
    </location>
</feature>
<feature type="strand" evidence="8">
    <location>
        <begin position="25"/>
        <end position="28"/>
    </location>
</feature>
<feature type="strand" evidence="8">
    <location>
        <begin position="31"/>
        <end position="33"/>
    </location>
</feature>
<feature type="strand" evidence="8">
    <location>
        <begin position="35"/>
        <end position="39"/>
    </location>
</feature>
<feature type="strand" evidence="8">
    <location>
        <begin position="48"/>
        <end position="50"/>
    </location>
</feature>
<feature type="helix" evidence="8">
    <location>
        <begin position="54"/>
        <end position="70"/>
    </location>
</feature>
<feature type="strand" evidence="8">
    <location>
        <begin position="75"/>
        <end position="82"/>
    </location>
</feature>
<feature type="strand" evidence="8">
    <location>
        <begin position="84"/>
        <end position="90"/>
    </location>
</feature>
<feature type="strand" evidence="8">
    <location>
        <begin position="96"/>
        <end position="98"/>
    </location>
</feature>
<feature type="helix" evidence="8">
    <location>
        <begin position="103"/>
        <end position="116"/>
    </location>
</feature>
<feature type="strand" evidence="8">
    <location>
        <begin position="120"/>
        <end position="127"/>
    </location>
</feature>
<feature type="helix" evidence="8">
    <location>
        <begin position="135"/>
        <end position="143"/>
    </location>
</feature>
<feature type="helix" evidence="8">
    <location>
        <begin position="145"/>
        <end position="154"/>
    </location>
</feature>
<feature type="helix" evidence="8">
    <location>
        <begin position="156"/>
        <end position="163"/>
    </location>
</feature>
<feature type="strand" evidence="8">
    <location>
        <begin position="169"/>
        <end position="176"/>
    </location>
</feature>
<feature type="helix" evidence="8">
    <location>
        <begin position="178"/>
        <end position="181"/>
    </location>
</feature>
<feature type="helix" evidence="8">
    <location>
        <begin position="191"/>
        <end position="193"/>
    </location>
</feature>
<feature type="helix" evidence="8">
    <location>
        <begin position="196"/>
        <end position="198"/>
    </location>
</feature>
<feature type="turn" evidence="8">
    <location>
        <begin position="203"/>
        <end position="206"/>
    </location>
</feature>
<feature type="helix" evidence="8">
    <location>
        <begin position="212"/>
        <end position="229"/>
    </location>
</feature>
<feature type="strand" evidence="8">
    <location>
        <begin position="235"/>
        <end position="240"/>
    </location>
</feature>
<feature type="helix" evidence="8">
    <location>
        <begin position="242"/>
        <end position="244"/>
    </location>
</feature>
<feature type="helix" evidence="8">
    <location>
        <begin position="257"/>
        <end position="264"/>
    </location>
</feature>
<feature type="strand" evidence="8">
    <location>
        <begin position="272"/>
        <end position="277"/>
    </location>
</feature>
<feature type="helix" evidence="8">
    <location>
        <begin position="295"/>
        <end position="298"/>
    </location>
</feature>
<feature type="strand" evidence="8">
    <location>
        <begin position="304"/>
        <end position="308"/>
    </location>
</feature>
<feature type="helix" evidence="8">
    <location>
        <begin position="311"/>
        <end position="313"/>
    </location>
</feature>
<feature type="helix" evidence="8">
    <location>
        <begin position="319"/>
        <end position="328"/>
    </location>
</feature>
<feature type="strand" evidence="8">
    <location>
        <begin position="332"/>
        <end position="337"/>
    </location>
</feature>
<feature type="strand" evidence="8">
    <location>
        <begin position="339"/>
        <end position="342"/>
    </location>
</feature>
<feature type="helix" evidence="8">
    <location>
        <begin position="344"/>
        <end position="353"/>
    </location>
</feature>
<feature type="turn" evidence="8">
    <location>
        <begin position="354"/>
        <end position="356"/>
    </location>
</feature>
<feature type="strand" evidence="8">
    <location>
        <begin position="361"/>
        <end position="364"/>
    </location>
</feature>
<comment type="function">
    <text evidence="3 4 5">Hydrolyzes 1,4-beta linked polysaccharide backbones of mannans. Hydrolyzes mannohexaose (M6) preferentially to mannotriose (M4) and less preferentially to mannotetraose (M3), mannopentaose (M5), and mannobiose (M2); hydrolyzes M5 preferentially to M2, and M3, and less preferentially to mannotetraose M4; hydrolyzes M4 preferentially to M3, and less preferentially to mannose (M1), plus very little M2. Does not hydrolyze mannobiose or mannotriose. Does not hydrolyze xlyan, starch, cellulose or galactose.</text>
</comment>
<comment type="catalytic activity">
    <reaction>
        <text>Random hydrolysis of (1-&gt;4)-beta-D-mannosidic linkages in mannans, galactomannans and glucomannans.</text>
        <dbReference type="EC" id="3.2.1.78"/>
    </reaction>
</comment>
<comment type="biophysicochemical properties">
    <kinetics>
        <KM evidence="3 5">2.49 mM for mannotetraose</KM>
        <KM evidence="3 5">1.61 mM for mannopentaose</KM>
        <KM evidence="3 5">0.5 mM for mannohexaose</KM>
    </kinetics>
    <phDependence>
        <text evidence="3 5">Optimum pH is 5.2.</text>
    </phDependence>
    <temperatureDependence>
        <text evidence="3 5">Optimum temperature is about 50 degrees Celsius.</text>
    </temperatureDependence>
</comment>
<comment type="subunit">
    <text evidence="3">Monomer.</text>
</comment>
<comment type="PTM">
    <text evidence="5">The disulfide bond between Cys-192 and Cys-259 has not been observed in X-ray crystallography (PubMed:16487541). This may be a consequence of the X-ray radiation.</text>
</comment>
<comment type="mass spectrometry" mass="39702.0" method="MALDI" evidence="3"/>
<comment type="similarity">
    <text evidence="6">Belongs to the glycosyl hydrolase 5 (cellulase A) family.</text>
</comment>
<name>MANA_MYTED</name>
<reference evidence="6" key="1">
    <citation type="journal article" date="2002" name="Eur. J. Biochem.">
        <title>Cloning and expression in Pichia pastoris of a blue mussel (Mytilus edulis) beta-mannanase gene.</title>
        <authorList>
            <person name="Xu B."/>
            <person name="Sellos D."/>
            <person name="Janson J.-C."/>
        </authorList>
    </citation>
    <scope>NUCLEOTIDE SEQUENCE [GENOMIC DNA]</scope>
    <scope>FUNCTION</scope>
    <source>
        <tissue evidence="4">Digestive gland</tissue>
        <tissue evidence="4">Gill</tissue>
    </source>
</reference>
<reference evidence="6" key="2">
    <citation type="journal article" date="2002" name="J. Biotechnol.">
        <title>endo-beta-1,4-mannanases from blue mussel, Mytilus edulis: purification, characterization, and mode of action.</title>
        <authorList>
            <person name="Xu B."/>
            <person name="Hagglund P."/>
            <person name="Stalbrand H."/>
            <person name="Janson J.-C."/>
        </authorList>
    </citation>
    <scope>PROTEIN SEQUENCE OF 18-53</scope>
    <scope>FUNCTION</scope>
    <scope>SUBUNIT</scope>
    <scope>BIOPHYSICOCHEMICAL PROPERTIES</scope>
    <scope>MASS SPECTROMETRY</scope>
    <source>
        <tissue evidence="3">Digestive gland</tissue>
    </source>
</reference>
<reference key="3">
    <citation type="journal article" date="2002" name="Acta Crystallogr. D">
        <title>Crystallization and X-ray analysis of native and selenomethionyl beta-mannanase Man5A from blue mussel, Mytilus edulis, expressed in Pichia pastoris.</title>
        <authorList>
            <person name="Xu B."/>
            <person name="Munoz I.G."/>
            <person name="Janson J.-C."/>
            <person name="Stahlberg J."/>
        </authorList>
    </citation>
    <scope>CRYSTALLIZATION</scope>
</reference>
<reference key="4">
    <citation type="journal article" date="2006" name="J. Mol. Biol.">
        <title>Three-dimensional crystal structure and enzymic characterization of beta-mannanase Man5A from blue mussel Mytilus edulis.</title>
        <authorList>
            <person name="Larsson A.M."/>
            <person name="Anderson L."/>
            <person name="Xu B."/>
            <person name="Munoz I.G."/>
            <person name="Uson I."/>
            <person name="Janson J.-C."/>
            <person name="Stalbrand H."/>
            <person name="Stahlberg J."/>
        </authorList>
    </citation>
    <scope>X-RAY CRYSTALLOGRAPHY (1.6 ANGSTROMS) OF 18-367</scope>
    <scope>FUNCTION</scope>
    <scope>BIOPHYSICOCHEMICAL PROPERTIES</scope>
</reference>
<sequence length="367" mass="40957">MLLTALAVLFASTGCQARLSVSGTNLNYNGHHIFLSGANQAWVNYARDFGHNQYSKGKSTFESTLSDIQSHGGNSVRVWLHIEGESTPEFDNNGYVTGIDNTLISDMRAYLHAAQRHNILIFFTLWNGAVKQSTHYRLNGLMVDTRKLQSYIDHALKPMANALKNEKALGGWDIMNEPEGEIKPGESSSEPCFDTRHLSGSGAGWAGHLYSAQEIGRFVNWQAAAIKEVDPGAMVTVGSWNMKADTDAMGFHNLYSDHCLVKAGGKQSGTLSFYQVHTYDWQNHFGNESPFKHSFSNFRLKKPMVIGEFNQEHGAGMSSESMFEWAYTKGYSGAWTWSRTDVSWNNQLRGIQHLKSRTDHGQVQFGL</sequence>